<keyword id="KW-0025">Alternative splicing</keyword>
<keyword id="KW-0963">Cytoplasm</keyword>
<keyword id="KW-0472">Membrane</keyword>
<keyword id="KW-1185">Reference proteome</keyword>
<keyword id="KW-0812">Transmembrane</keyword>
<keyword id="KW-1133">Transmembrane helix</keyword>
<comment type="function">
    <text evidence="1">Inhibits NF-kappa-B-dependent transcription by impairing NF-kappa-B binding to its targets.</text>
</comment>
<comment type="subunit">
    <text evidence="1">Interacts with p65/RELA and NFKB1.</text>
</comment>
<comment type="subcellular location">
    <subcellularLocation>
        <location evidence="7">Membrane</location>
        <topology evidence="7">Single-pass type III membrane protein</topology>
    </subcellularLocation>
    <subcellularLocation>
        <location evidence="1">Cytoplasm</location>
    </subcellularLocation>
</comment>
<comment type="alternative products">
    <event type="alternative splicing"/>
    <isoform>
        <id>Q6R653-1</id>
        <name>1</name>
        <sequence type="displayed"/>
    </isoform>
    <isoform>
        <id>Q6R653-2</id>
        <name>2</name>
        <sequence type="described" ref="VSP_029236 VSP_029237"/>
    </isoform>
    <isoform>
        <id>Q6R653-3</id>
        <name>3</name>
        <sequence type="described" ref="VSP_029236 VSP_029237 VSP_029239 VSP_029240"/>
    </isoform>
    <isoform>
        <id>Q6R653-4</id>
        <name>4</name>
        <sequence type="described" ref="VSP_029235 VSP_029238"/>
    </isoform>
</comment>
<comment type="similarity">
    <text evidence="7">Belongs to the unc-5 family.</text>
</comment>
<comment type="sequence caution" evidence="7">
    <conflict type="frameshift">
        <sequence resource="EMBL-CDS" id="BAE26140"/>
    </conflict>
</comment>
<feature type="chain" id="PRO_0000309568" description="UNC5C-like protein">
    <location>
        <begin position="1"/>
        <end position="518"/>
    </location>
</feature>
<feature type="topological domain" description="Extracellular" evidence="2">
    <location>
        <begin position="1"/>
        <end position="10"/>
    </location>
</feature>
<feature type="transmembrane region" description="Helical; Signal-anchor for type III membrane protein" evidence="2">
    <location>
        <begin position="11"/>
        <end position="31"/>
    </location>
</feature>
<feature type="topological domain" description="Cytoplasmic" evidence="2">
    <location>
        <begin position="32"/>
        <end position="518"/>
    </location>
</feature>
<feature type="domain" description="ZU5" evidence="4">
    <location>
        <begin position="102"/>
        <end position="237"/>
    </location>
</feature>
<feature type="domain" description="Death" evidence="3">
    <location>
        <begin position="415"/>
        <end position="494"/>
    </location>
</feature>
<feature type="region of interest" description="Interaction with RELA and NFKB1" evidence="1">
    <location>
        <begin position="186"/>
        <end position="400"/>
    </location>
</feature>
<feature type="region of interest" description="Peptidase S68" evidence="4">
    <location>
        <begin position="208"/>
        <end position="235"/>
    </location>
</feature>
<feature type="active site" evidence="4">
    <location>
        <position position="227"/>
    </location>
</feature>
<feature type="active site" evidence="4">
    <location>
        <position position="229"/>
    </location>
</feature>
<feature type="splice variant" id="VSP_029235" description="In isoform 4." evidence="6">
    <location>
        <begin position="1"/>
        <end position="354"/>
    </location>
</feature>
<feature type="splice variant" id="VSP_029236" description="In isoform 2 and isoform 3." evidence="5 6">
    <location>
        <begin position="1"/>
        <end position="342"/>
    </location>
</feature>
<feature type="splice variant" id="VSP_029237" description="In isoform 2 and isoform 3." evidence="5 6">
    <original>SFCFRRKAANGNEECSALTNEIIVTMHTFQD</original>
    <variation>MWMIAVASWFHISTSGMESAPSVLSASGERQ</variation>
    <location>
        <begin position="343"/>
        <end position="373"/>
    </location>
</feature>
<feature type="splice variant" id="VSP_029238" description="In isoform 4." evidence="6">
    <original>EECSALTNEIIVTMHTFQDGLETKYVEIL</original>
    <variation>MWMIAVASWFHISTSGMESAPSVLSASGE</variation>
    <location>
        <begin position="355"/>
        <end position="383"/>
    </location>
</feature>
<feature type="splice variant" id="VSP_029239" description="In isoform 3." evidence="6">
    <original>FLSC</original>
    <variation>DPVD</variation>
    <location>
        <begin position="446"/>
        <end position="449"/>
    </location>
</feature>
<feature type="splice variant" id="VSP_029240" description="In isoform 3." evidence="6">
    <location>
        <begin position="450"/>
        <end position="518"/>
    </location>
</feature>
<feature type="sequence conflict" description="In Ref. 1; AAS80164." evidence="7" ref="1">
    <original>P</original>
    <variation>L</variation>
    <location>
        <position position="46"/>
    </location>
</feature>
<feature type="sequence conflict" description="In Ref. 2; AAH95959." evidence="7" ref="2">
    <original>G</original>
    <variation>R</variation>
    <location>
        <position position="210"/>
    </location>
</feature>
<feature type="sequence conflict" description="In Ref. 2; AAH95959." evidence="7" ref="2">
    <original>S</original>
    <variation>L</variation>
    <location>
        <position position="388"/>
    </location>
</feature>
<feature type="sequence conflict" description="In Ref. 1; AAS80164." evidence="7" ref="1">
    <original>F</original>
    <variation>V</variation>
    <location>
        <position position="446"/>
    </location>
</feature>
<evidence type="ECO:0000250" key="1"/>
<evidence type="ECO:0000255" key="2"/>
<evidence type="ECO:0000255" key="3">
    <source>
        <dbReference type="PROSITE-ProRule" id="PRU00064"/>
    </source>
</evidence>
<evidence type="ECO:0000255" key="4">
    <source>
        <dbReference type="PROSITE-ProRule" id="PRU00485"/>
    </source>
</evidence>
<evidence type="ECO:0000303" key="5">
    <source>
    </source>
</evidence>
<evidence type="ECO:0000303" key="6">
    <source>
    </source>
</evidence>
<evidence type="ECO:0000305" key="7"/>
<accession>Q6R653</accession>
<accession>Q3UMF8</accession>
<accession>Q501N0</accession>
<accession>Q8BTQ8</accession>
<accession>Q8BYF7</accession>
<accession>Q8C1L0</accession>
<accession>Q8K3C8</accession>
<protein>
    <recommendedName>
        <fullName>UNC5C-like protein</fullName>
    </recommendedName>
    <alternativeName>
        <fullName>Protein unc-5 homolog C-like</fullName>
    </alternativeName>
    <alternativeName>
        <fullName>ZU5 and death domain-containing protein</fullName>
    </alternativeName>
</protein>
<name>UN5CL_MOUSE</name>
<gene>
    <name type="primary">Unc5cl</name>
    <name type="synonym">Zud</name>
</gene>
<dbReference type="EMBL" id="AY510108">
    <property type="protein sequence ID" value="AAS80164.1"/>
    <property type="molecule type" value="mRNA"/>
</dbReference>
<dbReference type="EMBL" id="AK010945">
    <property type="protein sequence ID" value="BAC25320.1"/>
    <property type="molecule type" value="mRNA"/>
</dbReference>
<dbReference type="EMBL" id="AK039924">
    <property type="protein sequence ID" value="BAC30479.1"/>
    <property type="molecule type" value="mRNA"/>
</dbReference>
<dbReference type="EMBL" id="AK089034">
    <property type="protein sequence ID" value="BAC40711.1"/>
    <property type="molecule type" value="mRNA"/>
</dbReference>
<dbReference type="EMBL" id="AK144925">
    <property type="protein sequence ID" value="BAE26140.1"/>
    <property type="status" value="ALT_FRAME"/>
    <property type="molecule type" value="mRNA"/>
</dbReference>
<dbReference type="EMBL" id="BC022701">
    <property type="protein sequence ID" value="AAH22701.1"/>
    <property type="molecule type" value="mRNA"/>
</dbReference>
<dbReference type="EMBL" id="BC095959">
    <property type="protein sequence ID" value="AAH95959.1"/>
    <property type="molecule type" value="mRNA"/>
</dbReference>
<dbReference type="CCDS" id="CCDS28870.1">
    <molecule id="Q6R653-1"/>
</dbReference>
<dbReference type="SMR" id="Q6R653"/>
<dbReference type="FunCoup" id="Q6R653">
    <property type="interactions" value="538"/>
</dbReference>
<dbReference type="STRING" id="10090.ENSMUSP00000074159"/>
<dbReference type="GlyGen" id="Q6R653">
    <property type="glycosylation" value="1 site"/>
</dbReference>
<dbReference type="PhosphoSitePlus" id="Q6R653"/>
<dbReference type="jPOST" id="Q6R653"/>
<dbReference type="PaxDb" id="10090-ENSMUSP00000074159"/>
<dbReference type="ProteomicsDB" id="300087">
    <molecule id="Q6R653-1"/>
</dbReference>
<dbReference type="ProteomicsDB" id="300088">
    <molecule id="Q6R653-2"/>
</dbReference>
<dbReference type="ProteomicsDB" id="300090">
    <molecule id="Q6R653-4"/>
</dbReference>
<dbReference type="UCSC" id="uc008cya.1">
    <molecule id="Q6R653-2"/>
    <property type="organism name" value="mouse"/>
</dbReference>
<dbReference type="UCSC" id="uc008cyb.1">
    <molecule id="Q6R653-4"/>
    <property type="organism name" value="mouse"/>
</dbReference>
<dbReference type="AGR" id="MGI:1923839"/>
<dbReference type="MGI" id="MGI:1923839">
    <property type="gene designation" value="Unc5cl"/>
</dbReference>
<dbReference type="eggNOG" id="KOG1480">
    <property type="taxonomic scope" value="Eukaryota"/>
</dbReference>
<dbReference type="InParanoid" id="Q6R653"/>
<dbReference type="PhylomeDB" id="Q6R653"/>
<dbReference type="ChiTaRS" id="Unc5cl">
    <property type="organism name" value="mouse"/>
</dbReference>
<dbReference type="PRO" id="PR:Q6R653"/>
<dbReference type="Proteomes" id="UP000000589">
    <property type="component" value="Unplaced"/>
</dbReference>
<dbReference type="RNAct" id="Q6R653">
    <property type="molecule type" value="protein"/>
</dbReference>
<dbReference type="GO" id="GO:0005737">
    <property type="term" value="C:cytoplasm"/>
    <property type="evidence" value="ECO:0007669"/>
    <property type="project" value="UniProtKB-SubCell"/>
</dbReference>
<dbReference type="GO" id="GO:0016020">
    <property type="term" value="C:membrane"/>
    <property type="evidence" value="ECO:0000266"/>
    <property type="project" value="MGI"/>
</dbReference>
<dbReference type="GO" id="GO:0005042">
    <property type="term" value="F:netrin receptor activity"/>
    <property type="evidence" value="ECO:0007669"/>
    <property type="project" value="InterPro"/>
</dbReference>
<dbReference type="GO" id="GO:0008233">
    <property type="term" value="F:peptidase activity"/>
    <property type="evidence" value="ECO:0000266"/>
    <property type="project" value="MGI"/>
</dbReference>
<dbReference type="GO" id="GO:0043123">
    <property type="term" value="P:positive regulation of canonical NF-kappaB signal transduction"/>
    <property type="evidence" value="ECO:0000314"/>
    <property type="project" value="MGI"/>
</dbReference>
<dbReference type="GO" id="GO:0046330">
    <property type="term" value="P:positive regulation of JNK cascade"/>
    <property type="evidence" value="ECO:0000266"/>
    <property type="project" value="MGI"/>
</dbReference>
<dbReference type="FunFam" id="1.10.533.10:FF:000054">
    <property type="entry name" value="Unc-5 family C-terminal like"/>
    <property type="match status" value="1"/>
</dbReference>
<dbReference type="FunFam" id="2.60.220.30:FF:000013">
    <property type="entry name" value="Unc-5 family C-terminal like"/>
    <property type="match status" value="1"/>
</dbReference>
<dbReference type="Gene3D" id="2.60.220.30">
    <property type="match status" value="1"/>
</dbReference>
<dbReference type="Gene3D" id="1.10.533.10">
    <property type="entry name" value="Death Domain, Fas"/>
    <property type="match status" value="1"/>
</dbReference>
<dbReference type="InterPro" id="IPR011029">
    <property type="entry name" value="DEATH-like_dom_sf"/>
</dbReference>
<dbReference type="InterPro" id="IPR000488">
    <property type="entry name" value="Death_dom"/>
</dbReference>
<dbReference type="InterPro" id="IPR037936">
    <property type="entry name" value="UNC5"/>
</dbReference>
<dbReference type="InterPro" id="IPR033772">
    <property type="entry name" value="UPA"/>
</dbReference>
<dbReference type="InterPro" id="IPR000906">
    <property type="entry name" value="ZU5_dom"/>
</dbReference>
<dbReference type="PANTHER" id="PTHR12582">
    <property type="entry name" value="NETRIN RECEPTOR UNC5"/>
    <property type="match status" value="1"/>
</dbReference>
<dbReference type="PANTHER" id="PTHR12582:SF41">
    <property type="entry name" value="UNC5C-LIKE PROTEIN"/>
    <property type="match status" value="1"/>
</dbReference>
<dbReference type="Pfam" id="PF00531">
    <property type="entry name" value="Death"/>
    <property type="match status" value="1"/>
</dbReference>
<dbReference type="Pfam" id="PF17217">
    <property type="entry name" value="UPA"/>
    <property type="match status" value="1"/>
</dbReference>
<dbReference type="Pfam" id="PF00791">
    <property type="entry name" value="ZU5"/>
    <property type="match status" value="1"/>
</dbReference>
<dbReference type="SMART" id="SM00005">
    <property type="entry name" value="DEATH"/>
    <property type="match status" value="1"/>
</dbReference>
<dbReference type="SMART" id="SM00218">
    <property type="entry name" value="ZU5"/>
    <property type="match status" value="1"/>
</dbReference>
<dbReference type="SUPFAM" id="SSF47986">
    <property type="entry name" value="DEATH domain"/>
    <property type="match status" value="1"/>
</dbReference>
<dbReference type="PROSITE" id="PS50017">
    <property type="entry name" value="DEATH_DOMAIN"/>
    <property type="match status" value="1"/>
</dbReference>
<dbReference type="PROSITE" id="PS51145">
    <property type="entry name" value="ZU5"/>
    <property type="match status" value="1"/>
</dbReference>
<sequence>MSPQESSVQPSQFLLLVGIPVASALLLAQCLRWHCCQWLPGTCRKPDDPEEPVSPSTPLPEYELPRQCPAPTLPEVAAFYQELHMPTQGQTVTRQMMHKLLVFSAREVDHRGGCLILQDTGISLLIPPGAVTVGRQERVSLVLVWDLTDAPSLSHRQGLVSPVVACGPHGASFLKPCTLTFKHCAQQPSQACAYSSNTSLLDAKDWKPLGQPGTHISRDECRILLSHFSLYTCVLEAPLGQTARKWLQLAMFCSPLVPGQTHLQLRVYFLNNTPCALQWAITNEQPHGGRMRGPCQLFDFTGARADQCLKLKYISEGWENVDDSSSQLVPHLHIWHGKCPFRSFCFRRKAANGNEECSALTNEIIVTMHTFQDGLETKYVEILRFQASEEETWAVPPPVSQPPLCNRLPPELFEQLQMLLEPNSVTGNDWRRLASHLGLCGMKIRFLSCQRSPAAAILELFEEQNGSLQELHYLMTSMERLDCASAIQNYLNRSPRGSPDRLHGGTWENHGLELDEKL</sequence>
<organism>
    <name type="scientific">Mus musculus</name>
    <name type="common">Mouse</name>
    <dbReference type="NCBI Taxonomy" id="10090"/>
    <lineage>
        <taxon>Eukaryota</taxon>
        <taxon>Metazoa</taxon>
        <taxon>Chordata</taxon>
        <taxon>Craniata</taxon>
        <taxon>Vertebrata</taxon>
        <taxon>Euteleostomi</taxon>
        <taxon>Mammalia</taxon>
        <taxon>Eutheria</taxon>
        <taxon>Euarchontoglires</taxon>
        <taxon>Glires</taxon>
        <taxon>Rodentia</taxon>
        <taxon>Myomorpha</taxon>
        <taxon>Muroidea</taxon>
        <taxon>Muridae</taxon>
        <taxon>Murinae</taxon>
        <taxon>Mus</taxon>
        <taxon>Mus</taxon>
    </lineage>
</organism>
<proteinExistence type="evidence at transcript level"/>
<reference key="1">
    <citation type="journal article" date="2004" name="J. Biol. Chem.">
        <title>Identification of a ZU5 and death domain-containing inhibitor of NF-kappaB.</title>
        <authorList>
            <person name="Zhang J."/>
            <person name="Xu L.-G."/>
            <person name="Han K.-J."/>
            <person name="Shu H.-B."/>
        </authorList>
    </citation>
    <scope>NUCLEOTIDE SEQUENCE [MRNA] (ISOFORM 1)</scope>
</reference>
<reference key="2">
    <citation type="journal article" date="2005" name="Science">
        <title>The transcriptional landscape of the mammalian genome.</title>
        <authorList>
            <person name="Carninci P."/>
            <person name="Kasukawa T."/>
            <person name="Katayama S."/>
            <person name="Gough J."/>
            <person name="Frith M.C."/>
            <person name="Maeda N."/>
            <person name="Oyama R."/>
            <person name="Ravasi T."/>
            <person name="Lenhard B."/>
            <person name="Wells C."/>
            <person name="Kodzius R."/>
            <person name="Shimokawa K."/>
            <person name="Bajic V.B."/>
            <person name="Brenner S.E."/>
            <person name="Batalov S."/>
            <person name="Forrest A.R."/>
            <person name="Zavolan M."/>
            <person name="Davis M.J."/>
            <person name="Wilming L.G."/>
            <person name="Aidinis V."/>
            <person name="Allen J.E."/>
            <person name="Ambesi-Impiombato A."/>
            <person name="Apweiler R."/>
            <person name="Aturaliya R.N."/>
            <person name="Bailey T.L."/>
            <person name="Bansal M."/>
            <person name="Baxter L."/>
            <person name="Beisel K.W."/>
            <person name="Bersano T."/>
            <person name="Bono H."/>
            <person name="Chalk A.M."/>
            <person name="Chiu K.P."/>
            <person name="Choudhary V."/>
            <person name="Christoffels A."/>
            <person name="Clutterbuck D.R."/>
            <person name="Crowe M.L."/>
            <person name="Dalla E."/>
            <person name="Dalrymple B.P."/>
            <person name="de Bono B."/>
            <person name="Della Gatta G."/>
            <person name="di Bernardo D."/>
            <person name="Down T."/>
            <person name="Engstrom P."/>
            <person name="Fagiolini M."/>
            <person name="Faulkner G."/>
            <person name="Fletcher C.F."/>
            <person name="Fukushima T."/>
            <person name="Furuno M."/>
            <person name="Futaki S."/>
            <person name="Gariboldi M."/>
            <person name="Georgii-Hemming P."/>
            <person name="Gingeras T.R."/>
            <person name="Gojobori T."/>
            <person name="Green R.E."/>
            <person name="Gustincich S."/>
            <person name="Harbers M."/>
            <person name="Hayashi Y."/>
            <person name="Hensch T.K."/>
            <person name="Hirokawa N."/>
            <person name="Hill D."/>
            <person name="Huminiecki L."/>
            <person name="Iacono M."/>
            <person name="Ikeo K."/>
            <person name="Iwama A."/>
            <person name="Ishikawa T."/>
            <person name="Jakt M."/>
            <person name="Kanapin A."/>
            <person name="Katoh M."/>
            <person name="Kawasawa Y."/>
            <person name="Kelso J."/>
            <person name="Kitamura H."/>
            <person name="Kitano H."/>
            <person name="Kollias G."/>
            <person name="Krishnan S.P."/>
            <person name="Kruger A."/>
            <person name="Kummerfeld S.K."/>
            <person name="Kurochkin I.V."/>
            <person name="Lareau L.F."/>
            <person name="Lazarevic D."/>
            <person name="Lipovich L."/>
            <person name="Liu J."/>
            <person name="Liuni S."/>
            <person name="McWilliam S."/>
            <person name="Madan Babu M."/>
            <person name="Madera M."/>
            <person name="Marchionni L."/>
            <person name="Matsuda H."/>
            <person name="Matsuzawa S."/>
            <person name="Miki H."/>
            <person name="Mignone F."/>
            <person name="Miyake S."/>
            <person name="Morris K."/>
            <person name="Mottagui-Tabar S."/>
            <person name="Mulder N."/>
            <person name="Nakano N."/>
            <person name="Nakauchi H."/>
            <person name="Ng P."/>
            <person name="Nilsson R."/>
            <person name="Nishiguchi S."/>
            <person name="Nishikawa S."/>
            <person name="Nori F."/>
            <person name="Ohara O."/>
            <person name="Okazaki Y."/>
            <person name="Orlando V."/>
            <person name="Pang K.C."/>
            <person name="Pavan W.J."/>
            <person name="Pavesi G."/>
            <person name="Pesole G."/>
            <person name="Petrovsky N."/>
            <person name="Piazza S."/>
            <person name="Reed J."/>
            <person name="Reid J.F."/>
            <person name="Ring B.Z."/>
            <person name="Ringwald M."/>
            <person name="Rost B."/>
            <person name="Ruan Y."/>
            <person name="Salzberg S.L."/>
            <person name="Sandelin A."/>
            <person name="Schneider C."/>
            <person name="Schoenbach C."/>
            <person name="Sekiguchi K."/>
            <person name="Semple C.A."/>
            <person name="Seno S."/>
            <person name="Sessa L."/>
            <person name="Sheng Y."/>
            <person name="Shibata Y."/>
            <person name="Shimada H."/>
            <person name="Shimada K."/>
            <person name="Silva D."/>
            <person name="Sinclair B."/>
            <person name="Sperling S."/>
            <person name="Stupka E."/>
            <person name="Sugiura K."/>
            <person name="Sultana R."/>
            <person name="Takenaka Y."/>
            <person name="Taki K."/>
            <person name="Tammoja K."/>
            <person name="Tan S.L."/>
            <person name="Tang S."/>
            <person name="Taylor M.S."/>
            <person name="Tegner J."/>
            <person name="Teichmann S.A."/>
            <person name="Ueda H.R."/>
            <person name="van Nimwegen E."/>
            <person name="Verardo R."/>
            <person name="Wei C.L."/>
            <person name="Yagi K."/>
            <person name="Yamanishi H."/>
            <person name="Zabarovsky E."/>
            <person name="Zhu S."/>
            <person name="Zimmer A."/>
            <person name="Hide W."/>
            <person name="Bult C."/>
            <person name="Grimmond S.M."/>
            <person name="Teasdale R.D."/>
            <person name="Liu E.T."/>
            <person name="Brusic V."/>
            <person name="Quackenbush J."/>
            <person name="Wahlestedt C."/>
            <person name="Mattick J.S."/>
            <person name="Hume D.A."/>
            <person name="Kai C."/>
            <person name="Sasaki D."/>
            <person name="Tomaru Y."/>
            <person name="Fukuda S."/>
            <person name="Kanamori-Katayama M."/>
            <person name="Suzuki M."/>
            <person name="Aoki J."/>
            <person name="Arakawa T."/>
            <person name="Iida J."/>
            <person name="Imamura K."/>
            <person name="Itoh M."/>
            <person name="Kato T."/>
            <person name="Kawaji H."/>
            <person name="Kawagashira N."/>
            <person name="Kawashima T."/>
            <person name="Kojima M."/>
            <person name="Kondo S."/>
            <person name="Konno H."/>
            <person name="Nakano K."/>
            <person name="Ninomiya N."/>
            <person name="Nishio T."/>
            <person name="Okada M."/>
            <person name="Plessy C."/>
            <person name="Shibata K."/>
            <person name="Shiraki T."/>
            <person name="Suzuki S."/>
            <person name="Tagami M."/>
            <person name="Waki K."/>
            <person name="Watahiki A."/>
            <person name="Okamura-Oho Y."/>
            <person name="Suzuki H."/>
            <person name="Kawai J."/>
            <person name="Hayashizaki Y."/>
        </authorList>
    </citation>
    <scope>NUCLEOTIDE SEQUENCE [LARGE SCALE MRNA] (ISOFORMS 1; 3 AND 4)</scope>
    <source>
        <strain>C57BL/6J</strain>
        <strain>NOD</strain>
        <tissue>Liver</tissue>
        <tissue>Mammary gland</tissue>
        <tissue>Thymus</tissue>
    </source>
</reference>
<reference key="3">
    <citation type="journal article" date="2004" name="Genome Res.">
        <title>The status, quality, and expansion of the NIH full-length cDNA project: the Mammalian Gene Collection (MGC).</title>
        <authorList>
            <consortium name="The MGC Project Team"/>
        </authorList>
    </citation>
    <scope>NUCLEOTIDE SEQUENCE [LARGE SCALE MRNA] (ISOFORMS 1 AND 2)</scope>
    <source>
        <strain>FVB/N</strain>
        <strain>NMRI</strain>
        <tissue>Mammary tumor</tissue>
    </source>
</reference>